<gene>
    <name evidence="1" type="primary">pfdA</name>
    <name type="ordered locus">Maeo_1364</name>
</gene>
<feature type="chain" id="PRO_1000022797" description="Prefoldin subunit alpha">
    <location>
        <begin position="1"/>
        <end position="144"/>
    </location>
</feature>
<comment type="function">
    <text evidence="1">Molecular chaperone capable of stabilizing a range of proteins. Seems to fulfill an ATP-independent, HSP70-like function in archaeal de novo protein folding.</text>
</comment>
<comment type="subunit">
    <text evidence="1">Heterohexamer of two alpha and four beta subunits.</text>
</comment>
<comment type="subcellular location">
    <subcellularLocation>
        <location evidence="1">Cytoplasm</location>
    </subcellularLocation>
</comment>
<comment type="similarity">
    <text evidence="1">Belongs to the prefoldin alpha subunit family.</text>
</comment>
<reference key="1">
    <citation type="submission" date="2007-06" db="EMBL/GenBank/DDBJ databases">
        <title>Complete sequence of Methanococcus aeolicus Nankai-3.</title>
        <authorList>
            <consortium name="US DOE Joint Genome Institute"/>
            <person name="Copeland A."/>
            <person name="Lucas S."/>
            <person name="Lapidus A."/>
            <person name="Barry K."/>
            <person name="Glavina del Rio T."/>
            <person name="Dalin E."/>
            <person name="Tice H."/>
            <person name="Pitluck S."/>
            <person name="Chain P."/>
            <person name="Malfatti S."/>
            <person name="Shin M."/>
            <person name="Vergez L."/>
            <person name="Schmutz J."/>
            <person name="Larimer F."/>
            <person name="Land M."/>
            <person name="Hauser L."/>
            <person name="Kyrpides N."/>
            <person name="Lykidis A."/>
            <person name="Sieprawska-Lupa M."/>
            <person name="Whitman W.B."/>
            <person name="Richardson P."/>
        </authorList>
    </citation>
    <scope>NUCLEOTIDE SEQUENCE [LARGE SCALE GENOMIC DNA]</scope>
    <source>
        <strain>ATCC BAA-1280 / DSM 17508 / OCM 812 / Nankai-3</strain>
    </source>
</reference>
<protein>
    <recommendedName>
        <fullName evidence="1">Prefoldin subunit alpha</fullName>
    </recommendedName>
    <alternativeName>
        <fullName evidence="1">GimC subunit alpha</fullName>
    </alternativeName>
</protein>
<evidence type="ECO:0000255" key="1">
    <source>
        <dbReference type="HAMAP-Rule" id="MF_00308"/>
    </source>
</evidence>
<organism>
    <name type="scientific">Methanococcus aeolicus (strain ATCC BAA-1280 / DSM 17508 / OCM 812 / Nankai-3)</name>
    <dbReference type="NCBI Taxonomy" id="419665"/>
    <lineage>
        <taxon>Archaea</taxon>
        <taxon>Methanobacteriati</taxon>
        <taxon>Methanobacteriota</taxon>
        <taxon>Methanomada group</taxon>
        <taxon>Methanococci</taxon>
        <taxon>Methanococcales</taxon>
        <taxon>Methanococcaceae</taxon>
        <taxon>Methanococcus</taxon>
    </lineage>
</organism>
<dbReference type="EMBL" id="CP000743">
    <property type="protein sequence ID" value="ABR56940.1"/>
    <property type="molecule type" value="Genomic_DNA"/>
</dbReference>
<dbReference type="RefSeq" id="WP_011974072.1">
    <property type="nucleotide sequence ID" value="NC_009635.1"/>
</dbReference>
<dbReference type="SMR" id="A6UWR8"/>
<dbReference type="STRING" id="419665.Maeo_1364"/>
<dbReference type="GeneID" id="5327172"/>
<dbReference type="GeneID" id="75304843"/>
<dbReference type="KEGG" id="mae:Maeo_1364"/>
<dbReference type="eggNOG" id="arCOG01341">
    <property type="taxonomic scope" value="Archaea"/>
</dbReference>
<dbReference type="HOGENOM" id="CLU_091867_1_3_2"/>
<dbReference type="OrthoDB" id="10045at2157"/>
<dbReference type="Proteomes" id="UP000001106">
    <property type="component" value="Chromosome"/>
</dbReference>
<dbReference type="GO" id="GO:0005737">
    <property type="term" value="C:cytoplasm"/>
    <property type="evidence" value="ECO:0007669"/>
    <property type="project" value="UniProtKB-SubCell"/>
</dbReference>
<dbReference type="GO" id="GO:0016272">
    <property type="term" value="C:prefoldin complex"/>
    <property type="evidence" value="ECO:0007669"/>
    <property type="project" value="UniProtKB-UniRule"/>
</dbReference>
<dbReference type="GO" id="GO:0051082">
    <property type="term" value="F:unfolded protein binding"/>
    <property type="evidence" value="ECO:0007669"/>
    <property type="project" value="UniProtKB-UniRule"/>
</dbReference>
<dbReference type="GO" id="GO:0006457">
    <property type="term" value="P:protein folding"/>
    <property type="evidence" value="ECO:0007669"/>
    <property type="project" value="UniProtKB-UniRule"/>
</dbReference>
<dbReference type="CDD" id="cd23160">
    <property type="entry name" value="Prefoldin_alpha_GimC"/>
    <property type="match status" value="1"/>
</dbReference>
<dbReference type="Gene3D" id="1.10.287.370">
    <property type="match status" value="1"/>
</dbReference>
<dbReference type="HAMAP" id="MF_00308">
    <property type="entry name" value="PfdA"/>
    <property type="match status" value="1"/>
</dbReference>
<dbReference type="InterPro" id="IPR011599">
    <property type="entry name" value="PFD_alpha_archaea"/>
</dbReference>
<dbReference type="InterPro" id="IPR009053">
    <property type="entry name" value="Prefoldin"/>
</dbReference>
<dbReference type="InterPro" id="IPR004127">
    <property type="entry name" value="Prefoldin_subunit_alpha"/>
</dbReference>
<dbReference type="NCBIfam" id="TIGR00293">
    <property type="entry name" value="prefoldin subunit alpha"/>
    <property type="match status" value="1"/>
</dbReference>
<dbReference type="Pfam" id="PF02996">
    <property type="entry name" value="Prefoldin"/>
    <property type="match status" value="1"/>
</dbReference>
<dbReference type="SUPFAM" id="SSF46579">
    <property type="entry name" value="Prefoldin"/>
    <property type="match status" value="1"/>
</dbReference>
<proteinExistence type="inferred from homology"/>
<keyword id="KW-0143">Chaperone</keyword>
<keyword id="KW-0963">Cytoplasm</keyword>
<sequence length="144" mass="16110">MNEELQQQYYQLEMYGQQVQKLQEELEKIELMKMELLKSIDSMEGLKDSEDILIPLGGGAFIKAKAMDTKKVIMGAGADVFLEKDISDVVVDFNKSIEDLDKAGSMIIAKIEETAKVAEQMQKDLEEKVQAMEGQMGGAPTLQM</sequence>
<accession>A6UWR8</accession>
<name>PFDA_META3</name>